<proteinExistence type="inferred from homology"/>
<feature type="chain" id="PRO_0000144416" description="ATP synthase subunit beta">
    <location>
        <begin position="1"/>
        <end position="478"/>
    </location>
</feature>
<feature type="binding site" evidence="1">
    <location>
        <begin position="163"/>
        <end position="170"/>
    </location>
    <ligand>
        <name>ATP</name>
        <dbReference type="ChEBI" id="CHEBI:30616"/>
    </ligand>
</feature>
<sequence>MAEVIKGRIVQVIGPVVDVEFEGVKELPRIKDGLKTIRRAIDDRGNWFEEVLFMEVAQHIGEHRVRAIAMGPTDGLVRGQEVEYLGGPIKIPVGKEVLGRIFNVAGQPIDEQGPVEAKEYWPMFRNPPELVEQSTKVEILETGIKVIDLLQPIIKGGKVGLFGGAGVGKTVLMQELIHNIARFHEGYSVVVGVGERTREGNDLWLEMKESGVLPYTVMVYGQMNEPPGVRFRVAHTGLTMAEYFRDVEGQDVLIFIDNIFRFVQAGSEVSTLLGRLPSAVGYQPTLNTDVGEVQERITSTKKGSITAIQAVYVPADDITDPAPWSIFAHLDATTVLTRRLAELGIYPAIDPLESTSKYLAPEYVGEEHYEVAMEVKRILQRYKELQEIIAILGMEELSEEDKAIVNRARRIQKFLSQPFHVAEQFTGMPGKYVKLEDTIRSFKEVLTGKYDHLPENAFYMVGTIEDAIEKAKQMGAKV</sequence>
<name>ATPB_AQUPY</name>
<reference key="1">
    <citation type="journal article" date="1998" name="Electrophoresis">
        <title>Bacterial phylogeny based on comparative sequence analysis.</title>
        <authorList>
            <person name="Ludwig W."/>
            <person name="Strunk O."/>
            <person name="Klugbauer S."/>
            <person name="Klugbauer N."/>
            <person name="Weizenegger M."/>
            <person name="Neumaier J."/>
            <person name="Bachleitner M."/>
            <person name="Schleifer K.H."/>
        </authorList>
    </citation>
    <scope>NUCLEOTIDE SEQUENCE [GENOMIC DNA]</scope>
    <source>
        <strain>DSM 6858 / JCM 9492 / Kol5A</strain>
    </source>
</reference>
<protein>
    <recommendedName>
        <fullName evidence="1">ATP synthase subunit beta</fullName>
        <ecNumber evidence="1">7.1.2.2</ecNumber>
    </recommendedName>
    <alternativeName>
        <fullName evidence="1">ATP synthase F1 sector subunit beta</fullName>
    </alternativeName>
    <alternativeName>
        <fullName evidence="1">F-ATPase subunit beta</fullName>
    </alternativeName>
</protein>
<evidence type="ECO:0000255" key="1">
    <source>
        <dbReference type="HAMAP-Rule" id="MF_01347"/>
    </source>
</evidence>
<accession>O50292</accession>
<gene>
    <name evidence="1" type="primary">atpD</name>
</gene>
<comment type="function">
    <text evidence="1">Produces ATP from ADP in the presence of a proton gradient across the membrane. The catalytic sites are hosted primarily by the beta subunits.</text>
</comment>
<comment type="catalytic activity">
    <reaction evidence="1">
        <text>ATP + H2O + 4 H(+)(in) = ADP + phosphate + 5 H(+)(out)</text>
        <dbReference type="Rhea" id="RHEA:57720"/>
        <dbReference type="ChEBI" id="CHEBI:15377"/>
        <dbReference type="ChEBI" id="CHEBI:15378"/>
        <dbReference type="ChEBI" id="CHEBI:30616"/>
        <dbReference type="ChEBI" id="CHEBI:43474"/>
        <dbReference type="ChEBI" id="CHEBI:456216"/>
        <dbReference type="EC" id="7.1.2.2"/>
    </reaction>
</comment>
<comment type="subunit">
    <text evidence="1">F-type ATPases have 2 components, CF(1) - the catalytic core - and CF(0) - the membrane proton channel. CF(1) has five subunits: alpha(3), beta(3), gamma(1), delta(1), epsilon(1). CF(0) has three main subunits: a(1), b(2) and c(9-12). The alpha and beta chains form an alternating ring which encloses part of the gamma chain. CF(1) is attached to CF(0) by a central stalk formed by the gamma and epsilon chains, while a peripheral stalk is formed by the delta and b chains.</text>
</comment>
<comment type="subcellular location">
    <subcellularLocation>
        <location evidence="1">Cell inner membrane</location>
        <topology evidence="1">Peripheral membrane protein</topology>
    </subcellularLocation>
</comment>
<comment type="similarity">
    <text evidence="1">Belongs to the ATPase alpha/beta chains family.</text>
</comment>
<organism>
    <name type="scientific">Aquifex pyrophilus</name>
    <dbReference type="NCBI Taxonomy" id="2714"/>
    <lineage>
        <taxon>Bacteria</taxon>
        <taxon>Pseudomonadati</taxon>
        <taxon>Aquificota</taxon>
        <taxon>Aquificia</taxon>
        <taxon>Aquificales</taxon>
        <taxon>Aquificaceae</taxon>
        <taxon>Aquifex</taxon>
    </lineage>
</organism>
<dbReference type="EC" id="7.1.2.2" evidence="1"/>
<dbReference type="EMBL" id="Y15786">
    <property type="protein sequence ID" value="CAA75780.1"/>
    <property type="molecule type" value="Genomic_DNA"/>
</dbReference>
<dbReference type="SMR" id="O50292"/>
<dbReference type="GO" id="GO:0005886">
    <property type="term" value="C:plasma membrane"/>
    <property type="evidence" value="ECO:0007669"/>
    <property type="project" value="UniProtKB-SubCell"/>
</dbReference>
<dbReference type="GO" id="GO:0045259">
    <property type="term" value="C:proton-transporting ATP synthase complex"/>
    <property type="evidence" value="ECO:0007669"/>
    <property type="project" value="UniProtKB-KW"/>
</dbReference>
<dbReference type="GO" id="GO:0005524">
    <property type="term" value="F:ATP binding"/>
    <property type="evidence" value="ECO:0007669"/>
    <property type="project" value="UniProtKB-UniRule"/>
</dbReference>
<dbReference type="GO" id="GO:0016887">
    <property type="term" value="F:ATP hydrolysis activity"/>
    <property type="evidence" value="ECO:0007669"/>
    <property type="project" value="InterPro"/>
</dbReference>
<dbReference type="GO" id="GO:0046933">
    <property type="term" value="F:proton-transporting ATP synthase activity, rotational mechanism"/>
    <property type="evidence" value="ECO:0007669"/>
    <property type="project" value="UniProtKB-UniRule"/>
</dbReference>
<dbReference type="CDD" id="cd18110">
    <property type="entry name" value="ATP-synt_F1_beta_C"/>
    <property type="match status" value="1"/>
</dbReference>
<dbReference type="CDD" id="cd18115">
    <property type="entry name" value="ATP-synt_F1_beta_N"/>
    <property type="match status" value="1"/>
</dbReference>
<dbReference type="CDD" id="cd01133">
    <property type="entry name" value="F1-ATPase_beta_CD"/>
    <property type="match status" value="1"/>
</dbReference>
<dbReference type="FunFam" id="1.10.1140.10:FF:000001">
    <property type="entry name" value="ATP synthase subunit beta"/>
    <property type="match status" value="1"/>
</dbReference>
<dbReference type="FunFam" id="3.40.50.300:FF:000004">
    <property type="entry name" value="ATP synthase subunit beta"/>
    <property type="match status" value="1"/>
</dbReference>
<dbReference type="Gene3D" id="2.40.10.170">
    <property type="match status" value="1"/>
</dbReference>
<dbReference type="Gene3D" id="1.10.1140.10">
    <property type="entry name" value="Bovine Mitochondrial F1-atpase, Atp Synthase Beta Chain, Chain D, domain 3"/>
    <property type="match status" value="1"/>
</dbReference>
<dbReference type="Gene3D" id="3.40.50.300">
    <property type="entry name" value="P-loop containing nucleotide triphosphate hydrolases"/>
    <property type="match status" value="1"/>
</dbReference>
<dbReference type="HAMAP" id="MF_01347">
    <property type="entry name" value="ATP_synth_beta_bact"/>
    <property type="match status" value="1"/>
</dbReference>
<dbReference type="InterPro" id="IPR003593">
    <property type="entry name" value="AAA+_ATPase"/>
</dbReference>
<dbReference type="InterPro" id="IPR055190">
    <property type="entry name" value="ATP-synt_VA_C"/>
</dbReference>
<dbReference type="InterPro" id="IPR005722">
    <property type="entry name" value="ATP_synth_F1_bsu"/>
</dbReference>
<dbReference type="InterPro" id="IPR020003">
    <property type="entry name" value="ATPase_a/bsu_AS"/>
</dbReference>
<dbReference type="InterPro" id="IPR050053">
    <property type="entry name" value="ATPase_alpha/beta_chains"/>
</dbReference>
<dbReference type="InterPro" id="IPR004100">
    <property type="entry name" value="ATPase_F1/V1/A1_a/bsu_N"/>
</dbReference>
<dbReference type="InterPro" id="IPR036121">
    <property type="entry name" value="ATPase_F1/V1/A1_a/bsu_N_sf"/>
</dbReference>
<dbReference type="InterPro" id="IPR000194">
    <property type="entry name" value="ATPase_F1/V1/A1_a/bsu_nucl-bd"/>
</dbReference>
<dbReference type="InterPro" id="IPR024034">
    <property type="entry name" value="ATPase_F1/V1_b/a_C"/>
</dbReference>
<dbReference type="InterPro" id="IPR027417">
    <property type="entry name" value="P-loop_NTPase"/>
</dbReference>
<dbReference type="NCBIfam" id="TIGR01039">
    <property type="entry name" value="atpD"/>
    <property type="match status" value="1"/>
</dbReference>
<dbReference type="PANTHER" id="PTHR15184">
    <property type="entry name" value="ATP SYNTHASE"/>
    <property type="match status" value="1"/>
</dbReference>
<dbReference type="PANTHER" id="PTHR15184:SF71">
    <property type="entry name" value="ATP SYNTHASE SUBUNIT BETA, MITOCHONDRIAL"/>
    <property type="match status" value="1"/>
</dbReference>
<dbReference type="Pfam" id="PF00006">
    <property type="entry name" value="ATP-synt_ab"/>
    <property type="match status" value="1"/>
</dbReference>
<dbReference type="Pfam" id="PF02874">
    <property type="entry name" value="ATP-synt_ab_N"/>
    <property type="match status" value="1"/>
</dbReference>
<dbReference type="Pfam" id="PF22919">
    <property type="entry name" value="ATP-synt_VA_C"/>
    <property type="match status" value="1"/>
</dbReference>
<dbReference type="SMART" id="SM00382">
    <property type="entry name" value="AAA"/>
    <property type="match status" value="1"/>
</dbReference>
<dbReference type="SUPFAM" id="SSF47917">
    <property type="entry name" value="C-terminal domain of alpha and beta subunits of F1 ATP synthase"/>
    <property type="match status" value="1"/>
</dbReference>
<dbReference type="SUPFAM" id="SSF50615">
    <property type="entry name" value="N-terminal domain of alpha and beta subunits of F1 ATP synthase"/>
    <property type="match status" value="1"/>
</dbReference>
<dbReference type="SUPFAM" id="SSF52540">
    <property type="entry name" value="P-loop containing nucleoside triphosphate hydrolases"/>
    <property type="match status" value="1"/>
</dbReference>
<dbReference type="PROSITE" id="PS00152">
    <property type="entry name" value="ATPASE_ALPHA_BETA"/>
    <property type="match status" value="1"/>
</dbReference>
<keyword id="KW-0066">ATP synthesis</keyword>
<keyword id="KW-0067">ATP-binding</keyword>
<keyword id="KW-0997">Cell inner membrane</keyword>
<keyword id="KW-1003">Cell membrane</keyword>
<keyword id="KW-0139">CF(1)</keyword>
<keyword id="KW-0375">Hydrogen ion transport</keyword>
<keyword id="KW-0406">Ion transport</keyword>
<keyword id="KW-0472">Membrane</keyword>
<keyword id="KW-0547">Nucleotide-binding</keyword>
<keyword id="KW-1278">Translocase</keyword>
<keyword id="KW-0813">Transport</keyword>